<proteinExistence type="evidence at protein level"/>
<feature type="chain" id="PRO_0000205720" description="Crooked neck-like protein 1">
    <location>
        <begin position="1"/>
        <end position="690"/>
    </location>
</feature>
<feature type="repeat" description="HAT 1">
    <location>
        <begin position="61"/>
        <end position="93"/>
    </location>
</feature>
<feature type="repeat" description="HAT 2">
    <location>
        <begin position="95"/>
        <end position="127"/>
    </location>
</feature>
<feature type="repeat" description="HAT 3">
    <location>
        <begin position="129"/>
        <end position="161"/>
    </location>
</feature>
<feature type="repeat" description="HAT 4">
    <location>
        <begin position="163"/>
        <end position="194"/>
    </location>
</feature>
<feature type="repeat" description="HAT 5">
    <location>
        <begin position="196"/>
        <end position="227"/>
    </location>
</feature>
<feature type="repeat" description="HAT 6">
    <location>
        <begin position="229"/>
        <end position="264"/>
    </location>
</feature>
<feature type="repeat" description="HAT 7">
    <location>
        <begin position="266"/>
        <end position="300"/>
    </location>
</feature>
<feature type="repeat" description="HAT 8">
    <location>
        <begin position="310"/>
        <end position="342"/>
    </location>
</feature>
<feature type="repeat" description="HAT 9">
    <location>
        <begin position="344"/>
        <end position="378"/>
    </location>
</feature>
<feature type="repeat" description="HAT 10">
    <location>
        <begin position="388"/>
        <end position="424"/>
    </location>
</feature>
<feature type="repeat" description="HAT 11">
    <location>
        <begin position="459"/>
        <end position="491"/>
    </location>
</feature>
<feature type="repeat" description="HAT 12">
    <location>
        <begin position="493"/>
        <end position="527"/>
    </location>
</feature>
<feature type="repeat" description="HAT 13">
    <location>
        <begin position="529"/>
        <end position="560"/>
    </location>
</feature>
<feature type="repeat" description="HAT 14">
    <location>
        <begin position="565"/>
        <end position="606"/>
    </location>
</feature>
<feature type="repeat" description="HAT 15">
    <location>
        <begin position="608"/>
        <end position="646"/>
    </location>
</feature>
<feature type="repeat" description="HAT 16">
    <location>
        <begin position="648"/>
        <end position="673"/>
    </location>
</feature>
<feature type="region of interest" description="Mediates interaction with HSP90" evidence="4">
    <location>
        <begin position="250"/>
        <end position="467"/>
    </location>
</feature>
<feature type="region of interest" description="Disordered" evidence="3">
    <location>
        <begin position="667"/>
        <end position="690"/>
    </location>
</feature>
<feature type="short sequence motif" description="Nuclear localization signal" evidence="2">
    <location>
        <begin position="618"/>
        <end position="626"/>
    </location>
</feature>
<feature type="compositionally biased region" description="Basic and acidic residues" evidence="3">
    <location>
        <begin position="667"/>
        <end position="679"/>
    </location>
</feature>
<feature type="compositionally biased region" description="Acidic residues" evidence="3">
    <location>
        <begin position="680"/>
        <end position="690"/>
    </location>
</feature>
<feature type="modified residue" description="Phosphoserine" evidence="1">
    <location>
        <position position="342"/>
    </location>
</feature>
<feature type="modified residue" description="Phosphoserine" evidence="6">
    <location>
        <position position="689"/>
    </location>
</feature>
<evidence type="ECO:0000250" key="1">
    <source>
        <dbReference type="UniProtKB" id="Q9BZJ0"/>
    </source>
</evidence>
<evidence type="ECO:0000255" key="2"/>
<evidence type="ECO:0000256" key="3">
    <source>
        <dbReference type="SAM" id="MobiDB-lite"/>
    </source>
</evidence>
<evidence type="ECO:0000269" key="4">
    <source>
    </source>
</evidence>
<evidence type="ECO:0000305" key="5"/>
<evidence type="ECO:0007744" key="6">
    <source>
    </source>
</evidence>
<comment type="function">
    <text evidence="1">Involved in pre-mRNA splicing process. As a component of the minor spliceosome, involved in the splicing of U12-type introns in pre-mRNAs.</text>
</comment>
<comment type="subunit">
    <text evidence="1 4">Identified in the spliceosome C complex. Present in a spliceosome complex assembled in vitro containing CRNKL1, HPRP8BP and SNRPB2 (By similarity). Component of the minor spliceosome, which splices U12-type introns (By similarity). Interacts with PPIL2 (via the PPIase cyclophilin-type domain); they may form a trimeric complex with HSP90 (PubMed:15189447).</text>
</comment>
<comment type="subcellular location">
    <subcellularLocation>
        <location evidence="1">Nucleus</location>
    </subcellularLocation>
    <subcellularLocation>
        <location evidence="1">Nucleus speckle</location>
    </subcellularLocation>
    <text evidence="1">Colocalizes with core spliceosomal snRNP proteins.</text>
</comment>
<comment type="similarity">
    <text evidence="5">Belongs to the crooked-neck family.</text>
</comment>
<reference key="1">
    <citation type="journal article" date="2005" name="Science">
        <title>The transcriptional landscape of the mammalian genome.</title>
        <authorList>
            <person name="Carninci P."/>
            <person name="Kasukawa T."/>
            <person name="Katayama S."/>
            <person name="Gough J."/>
            <person name="Frith M.C."/>
            <person name="Maeda N."/>
            <person name="Oyama R."/>
            <person name="Ravasi T."/>
            <person name="Lenhard B."/>
            <person name="Wells C."/>
            <person name="Kodzius R."/>
            <person name="Shimokawa K."/>
            <person name="Bajic V.B."/>
            <person name="Brenner S.E."/>
            <person name="Batalov S."/>
            <person name="Forrest A.R."/>
            <person name="Zavolan M."/>
            <person name="Davis M.J."/>
            <person name="Wilming L.G."/>
            <person name="Aidinis V."/>
            <person name="Allen J.E."/>
            <person name="Ambesi-Impiombato A."/>
            <person name="Apweiler R."/>
            <person name="Aturaliya R.N."/>
            <person name="Bailey T.L."/>
            <person name="Bansal M."/>
            <person name="Baxter L."/>
            <person name="Beisel K.W."/>
            <person name="Bersano T."/>
            <person name="Bono H."/>
            <person name="Chalk A.M."/>
            <person name="Chiu K.P."/>
            <person name="Choudhary V."/>
            <person name="Christoffels A."/>
            <person name="Clutterbuck D.R."/>
            <person name="Crowe M.L."/>
            <person name="Dalla E."/>
            <person name="Dalrymple B.P."/>
            <person name="de Bono B."/>
            <person name="Della Gatta G."/>
            <person name="di Bernardo D."/>
            <person name="Down T."/>
            <person name="Engstrom P."/>
            <person name="Fagiolini M."/>
            <person name="Faulkner G."/>
            <person name="Fletcher C.F."/>
            <person name="Fukushima T."/>
            <person name="Furuno M."/>
            <person name="Futaki S."/>
            <person name="Gariboldi M."/>
            <person name="Georgii-Hemming P."/>
            <person name="Gingeras T.R."/>
            <person name="Gojobori T."/>
            <person name="Green R.E."/>
            <person name="Gustincich S."/>
            <person name="Harbers M."/>
            <person name="Hayashi Y."/>
            <person name="Hensch T.K."/>
            <person name="Hirokawa N."/>
            <person name="Hill D."/>
            <person name="Huminiecki L."/>
            <person name="Iacono M."/>
            <person name="Ikeo K."/>
            <person name="Iwama A."/>
            <person name="Ishikawa T."/>
            <person name="Jakt M."/>
            <person name="Kanapin A."/>
            <person name="Katoh M."/>
            <person name="Kawasawa Y."/>
            <person name="Kelso J."/>
            <person name="Kitamura H."/>
            <person name="Kitano H."/>
            <person name="Kollias G."/>
            <person name="Krishnan S.P."/>
            <person name="Kruger A."/>
            <person name="Kummerfeld S.K."/>
            <person name="Kurochkin I.V."/>
            <person name="Lareau L.F."/>
            <person name="Lazarevic D."/>
            <person name="Lipovich L."/>
            <person name="Liu J."/>
            <person name="Liuni S."/>
            <person name="McWilliam S."/>
            <person name="Madan Babu M."/>
            <person name="Madera M."/>
            <person name="Marchionni L."/>
            <person name="Matsuda H."/>
            <person name="Matsuzawa S."/>
            <person name="Miki H."/>
            <person name="Mignone F."/>
            <person name="Miyake S."/>
            <person name="Morris K."/>
            <person name="Mottagui-Tabar S."/>
            <person name="Mulder N."/>
            <person name="Nakano N."/>
            <person name="Nakauchi H."/>
            <person name="Ng P."/>
            <person name="Nilsson R."/>
            <person name="Nishiguchi S."/>
            <person name="Nishikawa S."/>
            <person name="Nori F."/>
            <person name="Ohara O."/>
            <person name="Okazaki Y."/>
            <person name="Orlando V."/>
            <person name="Pang K.C."/>
            <person name="Pavan W.J."/>
            <person name="Pavesi G."/>
            <person name="Pesole G."/>
            <person name="Petrovsky N."/>
            <person name="Piazza S."/>
            <person name="Reed J."/>
            <person name="Reid J.F."/>
            <person name="Ring B.Z."/>
            <person name="Ringwald M."/>
            <person name="Rost B."/>
            <person name="Ruan Y."/>
            <person name="Salzberg S.L."/>
            <person name="Sandelin A."/>
            <person name="Schneider C."/>
            <person name="Schoenbach C."/>
            <person name="Sekiguchi K."/>
            <person name="Semple C.A."/>
            <person name="Seno S."/>
            <person name="Sessa L."/>
            <person name="Sheng Y."/>
            <person name="Shibata Y."/>
            <person name="Shimada H."/>
            <person name="Shimada K."/>
            <person name="Silva D."/>
            <person name="Sinclair B."/>
            <person name="Sperling S."/>
            <person name="Stupka E."/>
            <person name="Sugiura K."/>
            <person name="Sultana R."/>
            <person name="Takenaka Y."/>
            <person name="Taki K."/>
            <person name="Tammoja K."/>
            <person name="Tan S.L."/>
            <person name="Tang S."/>
            <person name="Taylor M.S."/>
            <person name="Tegner J."/>
            <person name="Teichmann S.A."/>
            <person name="Ueda H.R."/>
            <person name="van Nimwegen E."/>
            <person name="Verardo R."/>
            <person name="Wei C.L."/>
            <person name="Yagi K."/>
            <person name="Yamanishi H."/>
            <person name="Zabarovsky E."/>
            <person name="Zhu S."/>
            <person name="Zimmer A."/>
            <person name="Hide W."/>
            <person name="Bult C."/>
            <person name="Grimmond S.M."/>
            <person name="Teasdale R.D."/>
            <person name="Liu E.T."/>
            <person name="Brusic V."/>
            <person name="Quackenbush J."/>
            <person name="Wahlestedt C."/>
            <person name="Mattick J.S."/>
            <person name="Hume D.A."/>
            <person name="Kai C."/>
            <person name="Sasaki D."/>
            <person name="Tomaru Y."/>
            <person name="Fukuda S."/>
            <person name="Kanamori-Katayama M."/>
            <person name="Suzuki M."/>
            <person name="Aoki J."/>
            <person name="Arakawa T."/>
            <person name="Iida J."/>
            <person name="Imamura K."/>
            <person name="Itoh M."/>
            <person name="Kato T."/>
            <person name="Kawaji H."/>
            <person name="Kawagashira N."/>
            <person name="Kawashima T."/>
            <person name="Kojima M."/>
            <person name="Kondo S."/>
            <person name="Konno H."/>
            <person name="Nakano K."/>
            <person name="Ninomiya N."/>
            <person name="Nishio T."/>
            <person name="Okada M."/>
            <person name="Plessy C."/>
            <person name="Shibata K."/>
            <person name="Shiraki T."/>
            <person name="Suzuki S."/>
            <person name="Tagami M."/>
            <person name="Waki K."/>
            <person name="Watahiki A."/>
            <person name="Okamura-Oho Y."/>
            <person name="Suzuki H."/>
            <person name="Kawai J."/>
            <person name="Hayashizaki Y."/>
        </authorList>
    </citation>
    <scope>NUCLEOTIDE SEQUENCE [LARGE SCALE MRNA]</scope>
    <source>
        <strain>C57BL/6J</strain>
        <strain>NOD</strain>
        <tissue>Embryo</tissue>
        <tissue>Lung</tissue>
        <tissue>Thymus</tissue>
    </source>
</reference>
<reference key="2">
    <citation type="journal article" date="2004" name="Genome Res.">
        <title>The status, quality, and expansion of the NIH full-length cDNA project: the Mammalian Gene Collection (MGC).</title>
        <authorList>
            <consortium name="The MGC Project Team"/>
        </authorList>
    </citation>
    <scope>NUCLEOTIDE SEQUENCE [LARGE SCALE MRNA]</scope>
</reference>
<reference key="3">
    <citation type="journal article" date="2004" name="Genes Cells">
        <title>Interaction of U-box-type ubiquitin-protein ligases (E3s) with molecular chaperones.</title>
        <authorList>
            <person name="Hatakeyama S."/>
            <person name="Matsumoto M."/>
            <person name="Yada M."/>
            <person name="Nakayama K.I."/>
        </authorList>
    </citation>
    <scope>INTERACTION WITH PPIL2 AND HSP90</scope>
    <scope>REGION</scope>
</reference>
<reference key="4">
    <citation type="journal article" date="2007" name="Proc. Natl. Acad. Sci. U.S.A.">
        <title>Large-scale phosphorylation analysis of mouse liver.</title>
        <authorList>
            <person name="Villen J."/>
            <person name="Beausoleil S.A."/>
            <person name="Gerber S.A."/>
            <person name="Gygi S.P."/>
        </authorList>
    </citation>
    <scope>PHOSPHORYLATION [LARGE SCALE ANALYSIS] AT SER-689</scope>
    <scope>IDENTIFICATION BY MASS SPECTROMETRY [LARGE SCALE ANALYSIS]</scope>
    <source>
        <tissue>Liver</tissue>
    </source>
</reference>
<reference key="5">
    <citation type="journal article" date="2010" name="Cell">
        <title>A tissue-specific atlas of mouse protein phosphorylation and expression.</title>
        <authorList>
            <person name="Huttlin E.L."/>
            <person name="Jedrychowski M.P."/>
            <person name="Elias J.E."/>
            <person name="Goswami T."/>
            <person name="Rad R."/>
            <person name="Beausoleil S.A."/>
            <person name="Villen J."/>
            <person name="Haas W."/>
            <person name="Sowa M.E."/>
            <person name="Gygi S.P."/>
        </authorList>
    </citation>
    <scope>IDENTIFICATION BY MASS SPECTROMETRY [LARGE SCALE ANALYSIS]</scope>
    <source>
        <tissue>Brain</tissue>
        <tissue>Kidney</tissue>
        <tissue>Lung</tissue>
        <tissue>Pancreas</tissue>
        <tissue>Spleen</tissue>
        <tissue>Testis</tissue>
    </source>
</reference>
<protein>
    <recommendedName>
        <fullName>Crooked neck-like protein 1</fullName>
    </recommendedName>
    <alternativeName>
        <fullName>Crooked neck homolog</fullName>
    </alternativeName>
</protein>
<sequence length="690" mass="83416">MAASTAAGKQRIPKVAKVKNKAPAEVQITAEQLLREAKERELELLPPPPQQKITDEEELNDYKLRKRKTFEDNIRKNRTVISNWIKYAQWEESLKEIQRARSIYERALDVDYRNITLWLKYAEMEMKNRQVNHARNIWDRAITTLPRVNQFWYKYTYMEEMLGNVAGARQVFERWMEWQPEEQAWHSYINFELRYKEVERARTIYERFVLVHPAVKNWIKYARFEEKHAYFAHARKVYERAVEFFGDEHMDEHLYVAFAKFEENQKEFERVRVIYKYALDRISKQEAQELFKNYTIFEKKFGDRRGIEDIIVSKRRFQYEEEVKANPHNYDAWFDYLRLVESDAEADTVREVYERAIANVPPIQEKRHWKRYIYLWVNYALYEELEAKDPERTRQVYQASLELIPHKKFTFAKMWLYYAQFEIRQKNLPFARRALGTSIGKCPKNKLFKGYIELELQLREFDRCRKLYEKFLEFGPENCTSWIKFAELETILGDIERARAIYELAISQPRLDMPEVLWKSYIDFEIEQEETERTRNLYRQLLQRTQHVKVWISFAQFELSSGKEGSVAKCRQIYEEANKTMRNCEEKEERLMLLESWRSFEDEFGTVSDKERVDKLMPEKVKKRRKVQADDGSDAGWEEYYDYIFPEDAANQPNLKLLAMAKLWKKQQQEREAAEQDPDKDIDESESSSF</sequence>
<gene>
    <name type="primary">Crnkl1</name>
</gene>
<dbReference type="EMBL" id="AK004749">
    <property type="protein sequence ID" value="BAB23530.1"/>
    <property type="molecule type" value="mRNA"/>
</dbReference>
<dbReference type="EMBL" id="AK012962">
    <property type="protein sequence ID" value="BAB28572.1"/>
    <property type="molecule type" value="mRNA"/>
</dbReference>
<dbReference type="EMBL" id="AK088882">
    <property type="protein sequence ID" value="BAC40630.1"/>
    <property type="molecule type" value="mRNA"/>
</dbReference>
<dbReference type="EMBL" id="BC029187">
    <property type="protein sequence ID" value="AAH29187.1"/>
    <property type="molecule type" value="mRNA"/>
</dbReference>
<dbReference type="CCDS" id="CCDS16828.1"/>
<dbReference type="RefSeq" id="NP_080096.1">
    <property type="nucleotide sequence ID" value="NM_025820.3"/>
</dbReference>
<dbReference type="SMR" id="P63154"/>
<dbReference type="BioGRID" id="211782">
    <property type="interactions" value="36"/>
</dbReference>
<dbReference type="FunCoup" id="P63154">
    <property type="interactions" value="3407"/>
</dbReference>
<dbReference type="IntAct" id="P63154">
    <property type="interactions" value="28"/>
</dbReference>
<dbReference type="MINT" id="P63154"/>
<dbReference type="STRING" id="10090.ENSMUSP00000001818"/>
<dbReference type="GlyGen" id="P63154">
    <property type="glycosylation" value="1 site, 1 O-linked glycan (1 site)"/>
</dbReference>
<dbReference type="iPTMnet" id="P63154"/>
<dbReference type="PhosphoSitePlus" id="P63154"/>
<dbReference type="SwissPalm" id="P63154"/>
<dbReference type="PaxDb" id="10090-ENSMUSP00000001818"/>
<dbReference type="PeptideAtlas" id="P63154"/>
<dbReference type="ProteomicsDB" id="277897"/>
<dbReference type="Pumba" id="P63154"/>
<dbReference type="Antibodypedia" id="9534">
    <property type="antibodies" value="61 antibodies from 13 providers"/>
</dbReference>
<dbReference type="DNASU" id="66877"/>
<dbReference type="Ensembl" id="ENSMUST00000001818.5">
    <property type="protein sequence ID" value="ENSMUSP00000001818.5"/>
    <property type="gene ID" value="ENSMUSG00000001767.6"/>
</dbReference>
<dbReference type="GeneID" id="66877"/>
<dbReference type="KEGG" id="mmu:66877"/>
<dbReference type="UCSC" id="uc008mrz.1">
    <property type="organism name" value="mouse"/>
</dbReference>
<dbReference type="AGR" id="MGI:1914127"/>
<dbReference type="CTD" id="51340"/>
<dbReference type="MGI" id="MGI:1914127">
    <property type="gene designation" value="Crnkl1"/>
</dbReference>
<dbReference type="VEuPathDB" id="HostDB:ENSMUSG00000001767"/>
<dbReference type="eggNOG" id="KOG1915">
    <property type="taxonomic scope" value="Eukaryota"/>
</dbReference>
<dbReference type="GeneTree" id="ENSGT00550000074931"/>
<dbReference type="HOGENOM" id="CLU_011554_1_0_1"/>
<dbReference type="InParanoid" id="P63154"/>
<dbReference type="OMA" id="HIKVWIS"/>
<dbReference type="OrthoDB" id="541719at2759"/>
<dbReference type="PhylomeDB" id="P63154"/>
<dbReference type="TreeFam" id="TF300305"/>
<dbReference type="Reactome" id="R-MMU-72163">
    <property type="pathway name" value="mRNA Splicing - Major Pathway"/>
</dbReference>
<dbReference type="BioGRID-ORCS" id="66877">
    <property type="hits" value="27 hits in 78 CRISPR screens"/>
</dbReference>
<dbReference type="ChiTaRS" id="Crnkl1">
    <property type="organism name" value="mouse"/>
</dbReference>
<dbReference type="PRO" id="PR:P63154"/>
<dbReference type="Proteomes" id="UP000000589">
    <property type="component" value="Chromosome 2"/>
</dbReference>
<dbReference type="RNAct" id="P63154">
    <property type="molecule type" value="protein"/>
</dbReference>
<dbReference type="Bgee" id="ENSMUSG00000001767">
    <property type="expression patterns" value="Expressed in animal zygote and 255 other cell types or tissues"/>
</dbReference>
<dbReference type="GO" id="GO:0016607">
    <property type="term" value="C:nuclear speck"/>
    <property type="evidence" value="ECO:0007669"/>
    <property type="project" value="UniProtKB-SubCell"/>
</dbReference>
<dbReference type="GO" id="GO:0005634">
    <property type="term" value="C:nucleus"/>
    <property type="evidence" value="ECO:0000250"/>
    <property type="project" value="UniProtKB"/>
</dbReference>
<dbReference type="GO" id="GO:0005681">
    <property type="term" value="C:spliceosomal complex"/>
    <property type="evidence" value="ECO:0000250"/>
    <property type="project" value="UniProtKB"/>
</dbReference>
<dbReference type="GO" id="GO:0071007">
    <property type="term" value="C:U2-type catalytic step 2 spliceosome"/>
    <property type="evidence" value="ECO:0000250"/>
    <property type="project" value="UniProtKB"/>
</dbReference>
<dbReference type="GO" id="GO:0003723">
    <property type="term" value="F:RNA binding"/>
    <property type="evidence" value="ECO:0000250"/>
    <property type="project" value="UniProtKB"/>
</dbReference>
<dbReference type="GO" id="GO:0000398">
    <property type="term" value="P:mRNA splicing, via spliceosome"/>
    <property type="evidence" value="ECO:0000250"/>
    <property type="project" value="UniProtKB"/>
</dbReference>
<dbReference type="GO" id="GO:0000245">
    <property type="term" value="P:spliceosomal complex assembly"/>
    <property type="evidence" value="ECO:0000250"/>
    <property type="project" value="UniProtKB"/>
</dbReference>
<dbReference type="FunFam" id="1.25.40.10:FF:000075">
    <property type="entry name" value="Crooked neck pre-mRNA-splicing factor 1"/>
    <property type="match status" value="1"/>
</dbReference>
<dbReference type="FunFam" id="1.25.40.10:FF:000117">
    <property type="entry name" value="Crooked neck pre-mRNA-splicing factor 1"/>
    <property type="match status" value="1"/>
</dbReference>
<dbReference type="FunFam" id="1.25.40.10:FF:000269">
    <property type="entry name" value="Crooked neck pre-mRNA-splicing factor 1"/>
    <property type="match status" value="1"/>
</dbReference>
<dbReference type="Gene3D" id="1.25.40.10">
    <property type="entry name" value="Tetratricopeptide repeat domain"/>
    <property type="match status" value="3"/>
</dbReference>
<dbReference type="InterPro" id="IPR003107">
    <property type="entry name" value="HAT"/>
</dbReference>
<dbReference type="InterPro" id="IPR055430">
    <property type="entry name" value="HAT_Syf1_CNRKL1_C"/>
</dbReference>
<dbReference type="InterPro" id="IPR045075">
    <property type="entry name" value="Syf1-like"/>
</dbReference>
<dbReference type="InterPro" id="IPR011990">
    <property type="entry name" value="TPR-like_helical_dom_sf"/>
</dbReference>
<dbReference type="PANTHER" id="PTHR11246:SF3">
    <property type="entry name" value="CROOKED NECK-LIKE PROTEIN 1"/>
    <property type="match status" value="1"/>
</dbReference>
<dbReference type="PANTHER" id="PTHR11246">
    <property type="entry name" value="PRE-MRNA SPLICING FACTOR"/>
    <property type="match status" value="1"/>
</dbReference>
<dbReference type="Pfam" id="PF23231">
    <property type="entry name" value="HAT_Syf1_CNRKL1_C"/>
    <property type="match status" value="2"/>
</dbReference>
<dbReference type="SMART" id="SM00386">
    <property type="entry name" value="HAT"/>
    <property type="match status" value="13"/>
</dbReference>
<dbReference type="SUPFAM" id="SSF48452">
    <property type="entry name" value="TPR-like"/>
    <property type="match status" value="2"/>
</dbReference>
<keyword id="KW-0507">mRNA processing</keyword>
<keyword id="KW-0508">mRNA splicing</keyword>
<keyword id="KW-0539">Nucleus</keyword>
<keyword id="KW-0597">Phosphoprotein</keyword>
<keyword id="KW-1185">Reference proteome</keyword>
<keyword id="KW-0677">Repeat</keyword>
<keyword id="KW-0747">Spliceosome</keyword>
<name>CRNL1_MOUSE</name>
<accession>P63154</accession>
<accession>Q542E8</accession>
<accession>Q9CQC1</accession>
<organism>
    <name type="scientific">Mus musculus</name>
    <name type="common">Mouse</name>
    <dbReference type="NCBI Taxonomy" id="10090"/>
    <lineage>
        <taxon>Eukaryota</taxon>
        <taxon>Metazoa</taxon>
        <taxon>Chordata</taxon>
        <taxon>Craniata</taxon>
        <taxon>Vertebrata</taxon>
        <taxon>Euteleostomi</taxon>
        <taxon>Mammalia</taxon>
        <taxon>Eutheria</taxon>
        <taxon>Euarchontoglires</taxon>
        <taxon>Glires</taxon>
        <taxon>Rodentia</taxon>
        <taxon>Myomorpha</taxon>
        <taxon>Muroidea</taxon>
        <taxon>Muridae</taxon>
        <taxon>Murinae</taxon>
        <taxon>Mus</taxon>
        <taxon>Mus</taxon>
    </lineage>
</organism>